<accession>Q5F5V3</accession>
<keyword id="KW-1185">Reference proteome</keyword>
<keyword id="KW-0687">Ribonucleoprotein</keyword>
<keyword id="KW-0689">Ribosomal protein</keyword>
<feature type="chain" id="PRO_0000267897" description="Large ribosomal subunit protein bL17">
    <location>
        <begin position="1"/>
        <end position="122"/>
    </location>
</feature>
<dbReference type="EMBL" id="AE004969">
    <property type="protein sequence ID" value="AAW90434.1"/>
    <property type="molecule type" value="Genomic_DNA"/>
</dbReference>
<dbReference type="RefSeq" id="WP_002233417.1">
    <property type="nucleotide sequence ID" value="NC_002946.2"/>
</dbReference>
<dbReference type="RefSeq" id="YP_208846.1">
    <property type="nucleotide sequence ID" value="NC_002946.2"/>
</dbReference>
<dbReference type="SMR" id="Q5F5V3"/>
<dbReference type="STRING" id="242231.NGO_1817"/>
<dbReference type="GeneID" id="66754322"/>
<dbReference type="KEGG" id="ngo:NGO_1817"/>
<dbReference type="PATRIC" id="fig|242231.10.peg.2182"/>
<dbReference type="HOGENOM" id="CLU_074407_2_0_4"/>
<dbReference type="Proteomes" id="UP000000535">
    <property type="component" value="Chromosome"/>
</dbReference>
<dbReference type="GO" id="GO:0022625">
    <property type="term" value="C:cytosolic large ribosomal subunit"/>
    <property type="evidence" value="ECO:0007669"/>
    <property type="project" value="TreeGrafter"/>
</dbReference>
<dbReference type="GO" id="GO:0003735">
    <property type="term" value="F:structural constituent of ribosome"/>
    <property type="evidence" value="ECO:0007669"/>
    <property type="project" value="InterPro"/>
</dbReference>
<dbReference type="GO" id="GO:0006412">
    <property type="term" value="P:translation"/>
    <property type="evidence" value="ECO:0007669"/>
    <property type="project" value="UniProtKB-UniRule"/>
</dbReference>
<dbReference type="FunFam" id="3.90.1030.10:FF:000001">
    <property type="entry name" value="50S ribosomal protein L17"/>
    <property type="match status" value="1"/>
</dbReference>
<dbReference type="Gene3D" id="3.90.1030.10">
    <property type="entry name" value="Ribosomal protein L17"/>
    <property type="match status" value="1"/>
</dbReference>
<dbReference type="HAMAP" id="MF_01368">
    <property type="entry name" value="Ribosomal_bL17"/>
    <property type="match status" value="1"/>
</dbReference>
<dbReference type="InterPro" id="IPR000456">
    <property type="entry name" value="Ribosomal_bL17"/>
</dbReference>
<dbReference type="InterPro" id="IPR047859">
    <property type="entry name" value="Ribosomal_bL17_CS"/>
</dbReference>
<dbReference type="InterPro" id="IPR036373">
    <property type="entry name" value="Ribosomal_bL17_sf"/>
</dbReference>
<dbReference type="NCBIfam" id="TIGR00059">
    <property type="entry name" value="L17"/>
    <property type="match status" value="1"/>
</dbReference>
<dbReference type="PANTHER" id="PTHR14413:SF16">
    <property type="entry name" value="LARGE RIBOSOMAL SUBUNIT PROTEIN BL17M"/>
    <property type="match status" value="1"/>
</dbReference>
<dbReference type="PANTHER" id="PTHR14413">
    <property type="entry name" value="RIBOSOMAL PROTEIN L17"/>
    <property type="match status" value="1"/>
</dbReference>
<dbReference type="Pfam" id="PF01196">
    <property type="entry name" value="Ribosomal_L17"/>
    <property type="match status" value="1"/>
</dbReference>
<dbReference type="SUPFAM" id="SSF64263">
    <property type="entry name" value="Prokaryotic ribosomal protein L17"/>
    <property type="match status" value="1"/>
</dbReference>
<dbReference type="PROSITE" id="PS01167">
    <property type="entry name" value="RIBOSOMAL_L17"/>
    <property type="match status" value="1"/>
</dbReference>
<gene>
    <name evidence="1" type="primary">rplQ</name>
    <name type="ordered locus">NGO_1817</name>
</gene>
<name>RL17_NEIG1</name>
<comment type="subunit">
    <text evidence="1">Part of the 50S ribosomal subunit. Contacts protein L32.</text>
</comment>
<comment type="similarity">
    <text evidence="1">Belongs to the bacterial ribosomal protein bL17 family.</text>
</comment>
<sequence length="122" mass="13775">MRHRNGNRKLNRTSSHRAAMLRNMANSLLTHETIVTTLPKAKELRRVVEPLITLGKKPSLASRRLAFDRTRDRDVVVKLFGDLGPRFTARNGGYVRVLKYGFRKGDNAPLALVELVDKPAAE</sequence>
<organism>
    <name type="scientific">Neisseria gonorrhoeae (strain ATCC 700825 / FA 1090)</name>
    <dbReference type="NCBI Taxonomy" id="242231"/>
    <lineage>
        <taxon>Bacteria</taxon>
        <taxon>Pseudomonadati</taxon>
        <taxon>Pseudomonadota</taxon>
        <taxon>Betaproteobacteria</taxon>
        <taxon>Neisseriales</taxon>
        <taxon>Neisseriaceae</taxon>
        <taxon>Neisseria</taxon>
    </lineage>
</organism>
<proteinExistence type="inferred from homology"/>
<protein>
    <recommendedName>
        <fullName evidence="1">Large ribosomal subunit protein bL17</fullName>
    </recommendedName>
    <alternativeName>
        <fullName evidence="2">50S ribosomal protein L17</fullName>
    </alternativeName>
</protein>
<evidence type="ECO:0000255" key="1">
    <source>
        <dbReference type="HAMAP-Rule" id="MF_01368"/>
    </source>
</evidence>
<evidence type="ECO:0000305" key="2"/>
<reference key="1">
    <citation type="submission" date="2003-03" db="EMBL/GenBank/DDBJ databases">
        <title>The complete genome sequence of Neisseria gonorrhoeae.</title>
        <authorList>
            <person name="Lewis L.A."/>
            <person name="Gillaspy A.F."/>
            <person name="McLaughlin R.E."/>
            <person name="Gipson M."/>
            <person name="Ducey T.F."/>
            <person name="Ownbey T."/>
            <person name="Hartman K."/>
            <person name="Nydick C."/>
            <person name="Carson M.B."/>
            <person name="Vaughn J."/>
            <person name="Thomson C."/>
            <person name="Song L."/>
            <person name="Lin S."/>
            <person name="Yuan X."/>
            <person name="Najar F."/>
            <person name="Zhan M."/>
            <person name="Ren Q."/>
            <person name="Zhu H."/>
            <person name="Qi S."/>
            <person name="Kenton S.M."/>
            <person name="Lai H."/>
            <person name="White J.D."/>
            <person name="Clifton S."/>
            <person name="Roe B.A."/>
            <person name="Dyer D.W."/>
        </authorList>
    </citation>
    <scope>NUCLEOTIDE SEQUENCE [LARGE SCALE GENOMIC DNA]</scope>
    <source>
        <strain>ATCC 700825 / FA 1090</strain>
    </source>
</reference>